<accession>Q5UNT0</accession>
<sequence length="488" mass="57842">MSDNIDSKICTVYTTDGHFQMTYQTIKENDFFKNIFEIVDSICVRMNSVEFEYVAQYLRKEIPKDILINFAYVVKNFGIDFENIVYFNIGGKIFSFEKDFVTKKFKYFERFIVNYPGLGPDYTSILIDKSYNKFQQVLDFVKNQKCPINNDLEIELEYYGWIPNKNIKEFIDVSHFNFIHEGYESFVNHLDQPKYVVSKHSVINDGDKNIYQANIHTMGHVIIVVCLKNNIKKVDLLSKIHVCFQKENEKVPGEENYRSLTNYYLLRKNKHQIIIREALSSQYGDFITYNFNMKISKDLEIDSIKFYCINNGNIRDYYDIPNKKIIEYGKDESIDKINIKLHDLIFSVENSKFSCNYLLNRGINKKIVMDYIFKKDGYVIDYLLFEIPTEIEVSHIELKSRDEIICVSKLEEITLVPPLNRYPNTGSRKIVPVLSNRPTKLYRINKLYNKKLNVNFLLSHEMFCEIVIVLKEPSSGWLKLKYQYMNYY</sequence>
<evidence type="ECO:0000255" key="1">
    <source>
        <dbReference type="PROSITE-ProRule" id="PRU00037"/>
    </source>
</evidence>
<evidence type="ECO:0000305" key="2"/>
<reference key="1">
    <citation type="journal article" date="2004" name="Science">
        <title>The 1.2-megabase genome sequence of Mimivirus.</title>
        <authorList>
            <person name="Raoult D."/>
            <person name="Audic S."/>
            <person name="Robert C."/>
            <person name="Abergel C."/>
            <person name="Renesto P."/>
            <person name="Ogata H."/>
            <person name="La Scola B."/>
            <person name="Susan M."/>
            <person name="Claverie J.-M."/>
        </authorList>
    </citation>
    <scope>NUCLEOTIDE SEQUENCE [LARGE SCALE GENOMIC DNA]</scope>
    <source>
        <strain>Rowbotham-Bradford</strain>
    </source>
</reference>
<keyword id="KW-1185">Reference proteome</keyword>
<dbReference type="EMBL" id="AY653733">
    <property type="protein sequence ID" value="AAV50935.1"/>
    <property type="molecule type" value="Genomic_DNA"/>
</dbReference>
<dbReference type="SMR" id="Q5UNT0"/>
<dbReference type="KEGG" id="vg:9925321"/>
<dbReference type="OrthoDB" id="25394at10239"/>
<dbReference type="Proteomes" id="UP000001134">
    <property type="component" value="Genome"/>
</dbReference>
<dbReference type="Gene3D" id="3.30.710.10">
    <property type="entry name" value="Potassium Channel Kv1.1, Chain A"/>
    <property type="match status" value="1"/>
</dbReference>
<dbReference type="InterPro" id="IPR000210">
    <property type="entry name" value="BTB/POZ_dom"/>
</dbReference>
<dbReference type="InterPro" id="IPR011333">
    <property type="entry name" value="SKP1/BTB/POZ_sf"/>
</dbReference>
<dbReference type="SUPFAM" id="SSF54695">
    <property type="entry name" value="POZ domain"/>
    <property type="match status" value="1"/>
</dbReference>
<dbReference type="PROSITE" id="PS50097">
    <property type="entry name" value="BTB"/>
    <property type="match status" value="1"/>
</dbReference>
<organismHost>
    <name type="scientific">Acanthamoeba polyphaga</name>
    <name type="common">Amoeba</name>
    <dbReference type="NCBI Taxonomy" id="5757"/>
</organismHost>
<organism>
    <name type="scientific">Acanthamoeba polyphaga mimivirus</name>
    <name type="common">APMV</name>
    <dbReference type="NCBI Taxonomy" id="212035"/>
    <lineage>
        <taxon>Viruses</taxon>
        <taxon>Varidnaviria</taxon>
        <taxon>Bamfordvirae</taxon>
        <taxon>Nucleocytoviricota</taxon>
        <taxon>Megaviricetes</taxon>
        <taxon>Imitervirales</taxon>
        <taxon>Mimiviridae</taxon>
        <taxon>Megamimivirinae</taxon>
        <taxon>Mimivirus</taxon>
        <taxon>Mimivirus bradfordmassiliense</taxon>
    </lineage>
</organism>
<gene>
    <name type="ordered locus">MIMI_L674</name>
</gene>
<name>YL674_MIMIV</name>
<comment type="similarity">
    <text evidence="2">Belongs to the mimivirus BTB/WD family.</text>
</comment>
<feature type="chain" id="PRO_0000253254" description="Putative BTB/POZ domain-containing protein L674">
    <location>
        <begin position="1"/>
        <end position="488"/>
    </location>
</feature>
<feature type="domain" description="BTB" evidence="1">
    <location>
        <begin position="83"/>
        <end position="150"/>
    </location>
</feature>
<protein>
    <recommendedName>
        <fullName>Putative BTB/POZ domain-containing protein L674</fullName>
    </recommendedName>
</protein>
<proteinExistence type="inferred from homology"/>